<reference key="1">
    <citation type="submission" date="2007-05" db="EMBL/GenBank/DDBJ databases">
        <title>Complete sequence of chromosome of Staphylococcus aureus subsp. aureus JH9.</title>
        <authorList>
            <consortium name="US DOE Joint Genome Institute"/>
            <person name="Copeland A."/>
            <person name="Lucas S."/>
            <person name="Lapidus A."/>
            <person name="Barry K."/>
            <person name="Detter J.C."/>
            <person name="Glavina del Rio T."/>
            <person name="Hammon N."/>
            <person name="Israni S."/>
            <person name="Pitluck S."/>
            <person name="Chain P."/>
            <person name="Malfatti S."/>
            <person name="Shin M."/>
            <person name="Vergez L."/>
            <person name="Schmutz J."/>
            <person name="Larimer F."/>
            <person name="Land M."/>
            <person name="Hauser L."/>
            <person name="Kyrpides N."/>
            <person name="Kim E."/>
            <person name="Tomasz A."/>
            <person name="Richardson P."/>
        </authorList>
    </citation>
    <scope>NUCLEOTIDE SEQUENCE [LARGE SCALE GENOMIC DNA]</scope>
    <source>
        <strain>JH9</strain>
    </source>
</reference>
<feature type="chain" id="PRO_1000087023" description="Small ribosomal subunit protein uS14B">
    <location>
        <begin position="1"/>
        <end position="61"/>
    </location>
</feature>
<feature type="binding site" evidence="1">
    <location>
        <position position="24"/>
    </location>
    <ligand>
        <name>Zn(2+)</name>
        <dbReference type="ChEBI" id="CHEBI:29105"/>
    </ligand>
</feature>
<feature type="binding site" evidence="1">
    <location>
        <position position="27"/>
    </location>
    <ligand>
        <name>Zn(2+)</name>
        <dbReference type="ChEBI" id="CHEBI:29105"/>
    </ligand>
</feature>
<feature type="binding site" evidence="1">
    <location>
        <position position="40"/>
    </location>
    <ligand>
        <name>Zn(2+)</name>
        <dbReference type="ChEBI" id="CHEBI:29105"/>
    </ligand>
</feature>
<feature type="binding site" evidence="1">
    <location>
        <position position="43"/>
    </location>
    <ligand>
        <name>Zn(2+)</name>
        <dbReference type="ChEBI" id="CHEBI:29105"/>
    </ligand>
</feature>
<proteinExistence type="inferred from homology"/>
<accession>A5IV21</accession>
<evidence type="ECO:0000255" key="1">
    <source>
        <dbReference type="HAMAP-Rule" id="MF_01364"/>
    </source>
</evidence>
<evidence type="ECO:0000305" key="2"/>
<comment type="function">
    <text evidence="1">Binds 16S rRNA, required for the assembly of 30S particles and may also be responsible for determining the conformation of the 16S rRNA at the A site.</text>
</comment>
<comment type="cofactor">
    <cofactor evidence="1">
        <name>Zn(2+)</name>
        <dbReference type="ChEBI" id="CHEBI:29105"/>
    </cofactor>
    <text evidence="1">Binds 1 zinc ion per subunit.</text>
</comment>
<comment type="subunit">
    <text evidence="1">Part of the 30S ribosomal subunit. Contacts proteins S3 and S10.</text>
</comment>
<comment type="similarity">
    <text evidence="1">Belongs to the universal ribosomal protein uS14 family. Zinc-binding uS14 subfamily.</text>
</comment>
<keyword id="KW-0479">Metal-binding</keyword>
<keyword id="KW-0687">Ribonucleoprotein</keyword>
<keyword id="KW-0689">Ribosomal protein</keyword>
<keyword id="KW-0694">RNA-binding</keyword>
<keyword id="KW-0699">rRNA-binding</keyword>
<keyword id="KW-0862">Zinc</keyword>
<sequence length="61" mass="7300">MAKTSMVAKQQKKQKYAVREYTRCERCGRPHSVYRKFKLCRICFRELAYKGQIPGVRKASW</sequence>
<protein>
    <recommendedName>
        <fullName evidence="1">Small ribosomal subunit protein uS14B</fullName>
    </recommendedName>
    <alternativeName>
        <fullName evidence="2">30S ribosomal protein S14 type Z</fullName>
    </alternativeName>
</protein>
<gene>
    <name evidence="1" type="primary">rpsZ</name>
    <name evidence="1" type="synonym">rpsN</name>
    <name type="ordered locus">SaurJH9_2264</name>
</gene>
<dbReference type="EMBL" id="CP000703">
    <property type="protein sequence ID" value="ABQ50044.1"/>
    <property type="molecule type" value="Genomic_DNA"/>
</dbReference>
<dbReference type="RefSeq" id="WP_001140799.1">
    <property type="nucleotide sequence ID" value="NC_009487.1"/>
</dbReference>
<dbReference type="SMR" id="A5IV21"/>
<dbReference type="KEGG" id="saj:SaurJH9_2264"/>
<dbReference type="HOGENOM" id="CLU_139869_3_0_9"/>
<dbReference type="GO" id="GO:0015935">
    <property type="term" value="C:small ribosomal subunit"/>
    <property type="evidence" value="ECO:0007669"/>
    <property type="project" value="TreeGrafter"/>
</dbReference>
<dbReference type="GO" id="GO:0019843">
    <property type="term" value="F:rRNA binding"/>
    <property type="evidence" value="ECO:0007669"/>
    <property type="project" value="UniProtKB-UniRule"/>
</dbReference>
<dbReference type="GO" id="GO:0003735">
    <property type="term" value="F:structural constituent of ribosome"/>
    <property type="evidence" value="ECO:0007669"/>
    <property type="project" value="InterPro"/>
</dbReference>
<dbReference type="GO" id="GO:0008270">
    <property type="term" value="F:zinc ion binding"/>
    <property type="evidence" value="ECO:0007669"/>
    <property type="project" value="UniProtKB-UniRule"/>
</dbReference>
<dbReference type="GO" id="GO:0006412">
    <property type="term" value="P:translation"/>
    <property type="evidence" value="ECO:0007669"/>
    <property type="project" value="UniProtKB-UniRule"/>
</dbReference>
<dbReference type="FunFam" id="4.10.830.10:FF:000001">
    <property type="entry name" value="30S ribosomal protein S14 type Z"/>
    <property type="match status" value="1"/>
</dbReference>
<dbReference type="Gene3D" id="4.10.830.10">
    <property type="entry name" value="30s Ribosomal Protein S14, Chain N"/>
    <property type="match status" value="1"/>
</dbReference>
<dbReference type="HAMAP" id="MF_01364_B">
    <property type="entry name" value="Ribosomal_uS14_2_B"/>
    <property type="match status" value="1"/>
</dbReference>
<dbReference type="InterPro" id="IPR001209">
    <property type="entry name" value="Ribosomal_uS14"/>
</dbReference>
<dbReference type="InterPro" id="IPR023053">
    <property type="entry name" value="Ribosomal_uS14_bact"/>
</dbReference>
<dbReference type="InterPro" id="IPR018271">
    <property type="entry name" value="Ribosomal_uS14_CS"/>
</dbReference>
<dbReference type="InterPro" id="IPR043140">
    <property type="entry name" value="Ribosomal_uS14_sf"/>
</dbReference>
<dbReference type="NCBIfam" id="NF005974">
    <property type="entry name" value="PRK08061.1"/>
    <property type="match status" value="1"/>
</dbReference>
<dbReference type="PANTHER" id="PTHR19836">
    <property type="entry name" value="30S RIBOSOMAL PROTEIN S14"/>
    <property type="match status" value="1"/>
</dbReference>
<dbReference type="PANTHER" id="PTHR19836:SF26">
    <property type="entry name" value="SMALL RIBOSOMAL SUBUNIT PROTEIN US14B"/>
    <property type="match status" value="1"/>
</dbReference>
<dbReference type="Pfam" id="PF00253">
    <property type="entry name" value="Ribosomal_S14"/>
    <property type="match status" value="1"/>
</dbReference>
<dbReference type="SUPFAM" id="SSF57716">
    <property type="entry name" value="Glucocorticoid receptor-like (DNA-binding domain)"/>
    <property type="match status" value="1"/>
</dbReference>
<dbReference type="PROSITE" id="PS00527">
    <property type="entry name" value="RIBOSOMAL_S14"/>
    <property type="match status" value="1"/>
</dbReference>
<name>RS14Z_STAA9</name>
<organism>
    <name type="scientific">Staphylococcus aureus (strain JH9)</name>
    <dbReference type="NCBI Taxonomy" id="359786"/>
    <lineage>
        <taxon>Bacteria</taxon>
        <taxon>Bacillati</taxon>
        <taxon>Bacillota</taxon>
        <taxon>Bacilli</taxon>
        <taxon>Bacillales</taxon>
        <taxon>Staphylococcaceae</taxon>
        <taxon>Staphylococcus</taxon>
    </lineage>
</organism>